<reference key="1">
    <citation type="journal article" date="1998" name="Science">
        <title>Genome sequence of the nematode C. elegans: a platform for investigating biology.</title>
        <authorList>
            <consortium name="The C. elegans sequencing consortium"/>
        </authorList>
    </citation>
    <scope>NUCLEOTIDE SEQUENCE [LARGE SCALE GENOMIC DNA]</scope>
    <source>
        <strain>Bristol N2</strain>
    </source>
</reference>
<keyword id="KW-1185">Reference proteome</keyword>
<name>YQN5_CAEEL</name>
<accession>Q09526</accession>
<protein>
    <recommendedName>
        <fullName>Uncharacterized protein E02H1.5</fullName>
    </recommendedName>
</protein>
<dbReference type="EMBL" id="Z47075">
    <property type="protein sequence ID" value="CAA87380.1"/>
    <property type="molecule type" value="Genomic_DNA"/>
</dbReference>
<dbReference type="PIR" id="T20415">
    <property type="entry name" value="T20415"/>
</dbReference>
<dbReference type="RefSeq" id="NP_001369864.1">
    <property type="nucleotide sequence ID" value="NM_001383918.2"/>
</dbReference>
<dbReference type="RefSeq" id="NP_496064.1">
    <property type="nucleotide sequence ID" value="NM_063663.5"/>
</dbReference>
<dbReference type="SMR" id="Q09526"/>
<dbReference type="BioGRID" id="39833">
    <property type="interactions" value="1"/>
</dbReference>
<dbReference type="FunCoup" id="Q09526">
    <property type="interactions" value="1748"/>
</dbReference>
<dbReference type="STRING" id="6239.E02H1.5.1"/>
<dbReference type="PaxDb" id="6239-E02H1.5"/>
<dbReference type="PeptideAtlas" id="Q09526"/>
<dbReference type="EnsemblMetazoa" id="E02H1.5.1">
    <property type="protein sequence ID" value="E02H1.5.1"/>
    <property type="gene ID" value="WBGene00008457"/>
</dbReference>
<dbReference type="GeneID" id="174510"/>
<dbReference type="UCSC" id="E02H1.5.1">
    <property type="organism name" value="c. elegans"/>
</dbReference>
<dbReference type="AGR" id="WB:WBGene00008457"/>
<dbReference type="WormBase" id="E02H1.5">
    <property type="protein sequence ID" value="CE01540"/>
    <property type="gene ID" value="WBGene00008457"/>
</dbReference>
<dbReference type="eggNOG" id="KOG4380">
    <property type="taxonomic scope" value="Eukaryota"/>
</dbReference>
<dbReference type="GeneTree" id="ENSGT00390000005163"/>
<dbReference type="HOGENOM" id="CLU_1305871_0_0_1"/>
<dbReference type="InParanoid" id="Q09526"/>
<dbReference type="OMA" id="KDFPIGM"/>
<dbReference type="OrthoDB" id="514167at2759"/>
<dbReference type="PhylomeDB" id="Q09526"/>
<dbReference type="PRO" id="PR:Q09526"/>
<dbReference type="Proteomes" id="UP000001940">
    <property type="component" value="Chromosome II"/>
</dbReference>
<dbReference type="Bgee" id="WBGene00008457">
    <property type="expression patterns" value="Expressed in embryo and 4 other cell types or tissues"/>
</dbReference>
<dbReference type="GO" id="GO:0072669">
    <property type="term" value="C:tRNA-splicing ligase complex"/>
    <property type="evidence" value="ECO:0000318"/>
    <property type="project" value="GO_Central"/>
</dbReference>
<dbReference type="GO" id="GO:0003723">
    <property type="term" value="F:RNA binding"/>
    <property type="evidence" value="ECO:0000318"/>
    <property type="project" value="GO_Central"/>
</dbReference>
<dbReference type="GO" id="GO:0006388">
    <property type="term" value="P:tRNA splicing, via endonucleolytic cleavage and ligation"/>
    <property type="evidence" value="ECO:0000318"/>
    <property type="project" value="GO_Central"/>
</dbReference>
<dbReference type="InterPro" id="IPR019265">
    <property type="entry name" value="RTRAF"/>
</dbReference>
<dbReference type="PANTHER" id="PTHR15924">
    <property type="entry name" value="CLE"/>
    <property type="match status" value="1"/>
</dbReference>
<dbReference type="Pfam" id="PF10036">
    <property type="entry name" value="RLL"/>
    <property type="match status" value="1"/>
</dbReference>
<gene>
    <name type="ORF">E02H1.5</name>
</gene>
<proteinExistence type="predicted"/>
<feature type="chain" id="PRO_0000065269" description="Uncharacterized protein E02H1.5">
    <location>
        <begin position="1"/>
        <end position="253"/>
    </location>
</feature>
<sequence length="253" mass="28876">MSRRKLRAVEYDRDYINFDDDNEIRRLIVTVEEAHLKCRDQNWSAQMLDEQDVAKWTVELEKYFTEFGAPSGCSRAAAIDYVLNAAVQKIYEQKGGDTELCSSRLREQAEKVLEAHRDSQNPLNRLDYSSPNFAENARALCSILGISAHHPDPKVLMKAACLYIAENLGDDVIAEETEEVLKNKKTLNINAFPIGMQAPKNGAVHFSARLLRLICLRQLRVVSRMINETLVEIQNLTMDMSKRADLKQVQYGR</sequence>
<organism>
    <name type="scientific">Caenorhabditis elegans</name>
    <dbReference type="NCBI Taxonomy" id="6239"/>
    <lineage>
        <taxon>Eukaryota</taxon>
        <taxon>Metazoa</taxon>
        <taxon>Ecdysozoa</taxon>
        <taxon>Nematoda</taxon>
        <taxon>Chromadorea</taxon>
        <taxon>Rhabditida</taxon>
        <taxon>Rhabditina</taxon>
        <taxon>Rhabditomorpha</taxon>
        <taxon>Rhabditoidea</taxon>
        <taxon>Rhabditidae</taxon>
        <taxon>Peloderinae</taxon>
        <taxon>Caenorhabditis</taxon>
    </lineage>
</organism>